<proteinExistence type="inferred from homology"/>
<sequence>MSRRGTAEEKTAKSDPIYRNRLVNMLVNRILKHGKKSLAYQIIYRALKKIQQKTETNPLCVLRQAIRGVTPDIAVKARRVGGSTHQVPIEIGSTQGKALAIRWLLGASRKRPGRNMAFKLSSELVDAAKGSGDAIRKKEETHRMAEANRAFAHFR</sequence>
<protein>
    <recommendedName>
        <fullName evidence="2">Small ribosomal subunit protein uS7cz/uS7cy</fullName>
    </recommendedName>
    <alternativeName>
        <fullName>30S ribosomal protein S7, chloroplastic</fullName>
    </alternativeName>
</protein>
<organism>
    <name type="scientific">Nandina domestica</name>
    <name type="common">Heavenly bamboo</name>
    <dbReference type="NCBI Taxonomy" id="41776"/>
    <lineage>
        <taxon>Eukaryota</taxon>
        <taxon>Viridiplantae</taxon>
        <taxon>Streptophyta</taxon>
        <taxon>Embryophyta</taxon>
        <taxon>Tracheophyta</taxon>
        <taxon>Spermatophyta</taxon>
        <taxon>Magnoliopsida</taxon>
        <taxon>Ranunculales</taxon>
        <taxon>Berberidaceae</taxon>
        <taxon>Nandinoideae</taxon>
        <taxon>Nandineae</taxon>
        <taxon>Nandina</taxon>
    </lineage>
</organism>
<evidence type="ECO:0000250" key="1"/>
<evidence type="ECO:0000255" key="2">
    <source>
        <dbReference type="HAMAP-Rule" id="MF_00480"/>
    </source>
</evidence>
<evidence type="ECO:0000305" key="3"/>
<keyword id="KW-0150">Chloroplast</keyword>
<keyword id="KW-0934">Plastid</keyword>
<keyword id="KW-0687">Ribonucleoprotein</keyword>
<keyword id="KW-0689">Ribosomal protein</keyword>
<keyword id="KW-0694">RNA-binding</keyword>
<keyword id="KW-0699">rRNA-binding</keyword>
<name>RR7_NANDO</name>
<reference key="1">
    <citation type="journal article" date="2006" name="BMC Plant Biol.">
        <title>Rapid and accurate pyrosequencing of angiosperm plastid genomes.</title>
        <authorList>
            <person name="Moore M.J."/>
            <person name="Dhingra A."/>
            <person name="Soltis P.S."/>
            <person name="Shaw R."/>
            <person name="Farmerie W.G."/>
            <person name="Folta K.M."/>
            <person name="Soltis D.E."/>
        </authorList>
    </citation>
    <scope>NUCLEOTIDE SEQUENCE [LARGE SCALE GENOMIC DNA]</scope>
</reference>
<dbReference type="EMBL" id="DQ923117">
    <property type="protein sequence ID" value="ABI49911.1"/>
    <property type="molecule type" value="Genomic_DNA"/>
</dbReference>
<dbReference type="EMBL" id="DQ923117">
    <property type="protein sequence ID" value="ABI49924.1"/>
    <property type="molecule type" value="Genomic_DNA"/>
</dbReference>
<dbReference type="SMR" id="Q09FQ1"/>
<dbReference type="GO" id="GO:0009507">
    <property type="term" value="C:chloroplast"/>
    <property type="evidence" value="ECO:0007669"/>
    <property type="project" value="UniProtKB-SubCell"/>
</dbReference>
<dbReference type="GO" id="GO:0015935">
    <property type="term" value="C:small ribosomal subunit"/>
    <property type="evidence" value="ECO:0007669"/>
    <property type="project" value="InterPro"/>
</dbReference>
<dbReference type="GO" id="GO:0019843">
    <property type="term" value="F:rRNA binding"/>
    <property type="evidence" value="ECO:0007669"/>
    <property type="project" value="UniProtKB-UniRule"/>
</dbReference>
<dbReference type="GO" id="GO:0003735">
    <property type="term" value="F:structural constituent of ribosome"/>
    <property type="evidence" value="ECO:0007669"/>
    <property type="project" value="InterPro"/>
</dbReference>
<dbReference type="GO" id="GO:0006412">
    <property type="term" value="P:translation"/>
    <property type="evidence" value="ECO:0007669"/>
    <property type="project" value="UniProtKB-UniRule"/>
</dbReference>
<dbReference type="CDD" id="cd14871">
    <property type="entry name" value="uS7_Chloroplast"/>
    <property type="match status" value="1"/>
</dbReference>
<dbReference type="FunFam" id="1.10.455.10:FF:000001">
    <property type="entry name" value="30S ribosomal protein S7"/>
    <property type="match status" value="1"/>
</dbReference>
<dbReference type="Gene3D" id="1.10.455.10">
    <property type="entry name" value="Ribosomal protein S7 domain"/>
    <property type="match status" value="1"/>
</dbReference>
<dbReference type="HAMAP" id="MF_00480_B">
    <property type="entry name" value="Ribosomal_uS7_B"/>
    <property type="match status" value="1"/>
</dbReference>
<dbReference type="InterPro" id="IPR000235">
    <property type="entry name" value="Ribosomal_uS7"/>
</dbReference>
<dbReference type="InterPro" id="IPR005717">
    <property type="entry name" value="Ribosomal_uS7_bac/org-type"/>
</dbReference>
<dbReference type="InterPro" id="IPR020606">
    <property type="entry name" value="Ribosomal_uS7_CS"/>
</dbReference>
<dbReference type="InterPro" id="IPR023798">
    <property type="entry name" value="Ribosomal_uS7_dom"/>
</dbReference>
<dbReference type="InterPro" id="IPR036823">
    <property type="entry name" value="Ribosomal_uS7_dom_sf"/>
</dbReference>
<dbReference type="NCBIfam" id="TIGR01029">
    <property type="entry name" value="rpsG_bact"/>
    <property type="match status" value="1"/>
</dbReference>
<dbReference type="PANTHER" id="PTHR11205">
    <property type="entry name" value="RIBOSOMAL PROTEIN S7"/>
    <property type="match status" value="1"/>
</dbReference>
<dbReference type="Pfam" id="PF00177">
    <property type="entry name" value="Ribosomal_S7"/>
    <property type="match status" value="1"/>
</dbReference>
<dbReference type="PIRSF" id="PIRSF002122">
    <property type="entry name" value="RPS7p_RPS7a_RPS5e_RPS7o"/>
    <property type="match status" value="1"/>
</dbReference>
<dbReference type="SUPFAM" id="SSF47973">
    <property type="entry name" value="Ribosomal protein S7"/>
    <property type="match status" value="1"/>
</dbReference>
<dbReference type="PROSITE" id="PS00052">
    <property type="entry name" value="RIBOSOMAL_S7"/>
    <property type="match status" value="1"/>
</dbReference>
<gene>
    <name type="primary">rps7-A</name>
</gene>
<gene>
    <name type="primary">rps7-B</name>
</gene>
<comment type="function">
    <text evidence="1">One of the primary rRNA binding proteins, it binds directly to 16S rRNA where it nucleates assembly of the head domain of the 30S subunit.</text>
</comment>
<comment type="subunit">
    <text evidence="1">Part of the 30S ribosomal subunit.</text>
</comment>
<comment type="subcellular location">
    <subcellularLocation>
        <location>Plastid</location>
        <location>Chloroplast</location>
    </subcellularLocation>
</comment>
<comment type="similarity">
    <text evidence="3">Belongs to the universal ribosomal protein uS7 family.</text>
</comment>
<geneLocation type="chloroplast"/>
<accession>Q09FQ1</accession>
<feature type="chain" id="PRO_0000344350" description="Small ribosomal subunit protein uS7cz/uS7cy">
    <location>
        <begin position="1"/>
        <end position="155"/>
    </location>
</feature>